<gene>
    <name evidence="1" type="primary">coaD</name>
</gene>
<sequence length="160" mass="17832">MTTRVIYPGTFDPITNGHLDLIERAAAMFDTVIVGVAYNPTKKPLFDLNERVALAQSVTQHLPNVEIVGFSGLLVNFAKEHNANVLVRGLRAVSDFEYEFQLANMNRRLMPELETVFLTPAEENSFISSTIVKEVALHKGDVSQFVPNQISQALNKKLFA</sequence>
<protein>
    <recommendedName>
        <fullName evidence="1">Phosphopantetheine adenylyltransferase</fullName>
        <ecNumber evidence="1">2.7.7.3</ecNumber>
    </recommendedName>
    <alternativeName>
        <fullName evidence="1">Dephospho-CoA pyrophosphorylase</fullName>
    </alternativeName>
    <alternativeName>
        <fullName evidence="1">Pantetheine-phosphate adenylyltransferase</fullName>
        <shortName evidence="1">PPAT</shortName>
    </alternativeName>
</protein>
<organism>
    <name type="scientific">Photobacterium damsela subsp. piscicida</name>
    <name type="common">Pasteurella piscicida</name>
    <dbReference type="NCBI Taxonomy" id="38294"/>
    <lineage>
        <taxon>Bacteria</taxon>
        <taxon>Pseudomonadati</taxon>
        <taxon>Pseudomonadota</taxon>
        <taxon>Gammaproteobacteria</taxon>
        <taxon>Vibrionales</taxon>
        <taxon>Vibrionaceae</taxon>
        <taxon>Photobacterium</taxon>
    </lineage>
</organism>
<proteinExistence type="inferred from homology"/>
<reference key="1">
    <citation type="submission" date="2001-11" db="EMBL/GenBank/DDBJ databases">
        <title>LPS biosynthesis protein (Serratia marcescens) homolog.</title>
        <authorList>
            <person name="Rattanachai A."/>
            <person name="Hirono I."/>
            <person name="Aoki T."/>
        </authorList>
    </citation>
    <scope>NUCLEOTIDE SEQUENCE [GENOMIC DNA]</scope>
</reference>
<keyword id="KW-0067">ATP-binding</keyword>
<keyword id="KW-0173">Coenzyme A biosynthesis</keyword>
<keyword id="KW-0963">Cytoplasm</keyword>
<keyword id="KW-0460">Magnesium</keyword>
<keyword id="KW-0547">Nucleotide-binding</keyword>
<keyword id="KW-0548">Nucleotidyltransferase</keyword>
<keyword id="KW-0808">Transferase</keyword>
<name>COAD_PHODP</name>
<dbReference type="EC" id="2.7.7.3" evidence="1"/>
<dbReference type="EMBL" id="AB074283">
    <property type="protein sequence ID" value="BAB72023.1"/>
    <property type="molecule type" value="Genomic_DNA"/>
</dbReference>
<dbReference type="RefSeq" id="WP_044173998.1">
    <property type="nucleotide sequence ID" value="NZ_SUMH01000354.1"/>
</dbReference>
<dbReference type="SMR" id="Q8VW75"/>
<dbReference type="UniPathway" id="UPA00241">
    <property type="reaction ID" value="UER00355"/>
</dbReference>
<dbReference type="GO" id="GO:0005737">
    <property type="term" value="C:cytoplasm"/>
    <property type="evidence" value="ECO:0007669"/>
    <property type="project" value="UniProtKB-SubCell"/>
</dbReference>
<dbReference type="GO" id="GO:0005524">
    <property type="term" value="F:ATP binding"/>
    <property type="evidence" value="ECO:0007669"/>
    <property type="project" value="UniProtKB-KW"/>
</dbReference>
<dbReference type="GO" id="GO:0004595">
    <property type="term" value="F:pantetheine-phosphate adenylyltransferase activity"/>
    <property type="evidence" value="ECO:0007669"/>
    <property type="project" value="UniProtKB-UniRule"/>
</dbReference>
<dbReference type="GO" id="GO:0015937">
    <property type="term" value="P:coenzyme A biosynthetic process"/>
    <property type="evidence" value="ECO:0007669"/>
    <property type="project" value="UniProtKB-UniRule"/>
</dbReference>
<dbReference type="CDD" id="cd02163">
    <property type="entry name" value="PPAT"/>
    <property type="match status" value="1"/>
</dbReference>
<dbReference type="FunFam" id="3.40.50.620:FF:000012">
    <property type="entry name" value="Phosphopantetheine adenylyltransferase"/>
    <property type="match status" value="1"/>
</dbReference>
<dbReference type="Gene3D" id="3.40.50.620">
    <property type="entry name" value="HUPs"/>
    <property type="match status" value="1"/>
</dbReference>
<dbReference type="HAMAP" id="MF_00151">
    <property type="entry name" value="PPAT_bact"/>
    <property type="match status" value="1"/>
</dbReference>
<dbReference type="InterPro" id="IPR004821">
    <property type="entry name" value="Cyt_trans-like"/>
</dbReference>
<dbReference type="InterPro" id="IPR001980">
    <property type="entry name" value="PPAT"/>
</dbReference>
<dbReference type="InterPro" id="IPR014729">
    <property type="entry name" value="Rossmann-like_a/b/a_fold"/>
</dbReference>
<dbReference type="NCBIfam" id="TIGR01510">
    <property type="entry name" value="coaD_prev_kdtB"/>
    <property type="match status" value="1"/>
</dbReference>
<dbReference type="NCBIfam" id="TIGR00125">
    <property type="entry name" value="cyt_tran_rel"/>
    <property type="match status" value="1"/>
</dbReference>
<dbReference type="PANTHER" id="PTHR21342">
    <property type="entry name" value="PHOSPHOPANTETHEINE ADENYLYLTRANSFERASE"/>
    <property type="match status" value="1"/>
</dbReference>
<dbReference type="PANTHER" id="PTHR21342:SF1">
    <property type="entry name" value="PHOSPHOPANTETHEINE ADENYLYLTRANSFERASE"/>
    <property type="match status" value="1"/>
</dbReference>
<dbReference type="Pfam" id="PF01467">
    <property type="entry name" value="CTP_transf_like"/>
    <property type="match status" value="1"/>
</dbReference>
<dbReference type="PRINTS" id="PR01020">
    <property type="entry name" value="LPSBIOSNTHSS"/>
</dbReference>
<dbReference type="SUPFAM" id="SSF52374">
    <property type="entry name" value="Nucleotidylyl transferase"/>
    <property type="match status" value="1"/>
</dbReference>
<accession>Q8VW75</accession>
<feature type="chain" id="PRO_0000156249" description="Phosphopantetheine adenylyltransferase">
    <location>
        <begin position="1"/>
        <end position="160"/>
    </location>
</feature>
<feature type="binding site" evidence="1">
    <location>
        <begin position="10"/>
        <end position="11"/>
    </location>
    <ligand>
        <name>ATP</name>
        <dbReference type="ChEBI" id="CHEBI:30616"/>
    </ligand>
</feature>
<feature type="binding site" evidence="1">
    <location>
        <position position="10"/>
    </location>
    <ligand>
        <name>substrate</name>
    </ligand>
</feature>
<feature type="binding site" evidence="1">
    <location>
        <position position="18"/>
    </location>
    <ligand>
        <name>ATP</name>
        <dbReference type="ChEBI" id="CHEBI:30616"/>
    </ligand>
</feature>
<feature type="binding site" evidence="1">
    <location>
        <position position="42"/>
    </location>
    <ligand>
        <name>substrate</name>
    </ligand>
</feature>
<feature type="binding site" evidence="1">
    <location>
        <position position="74"/>
    </location>
    <ligand>
        <name>substrate</name>
    </ligand>
</feature>
<feature type="binding site" evidence="1">
    <location>
        <position position="88"/>
    </location>
    <ligand>
        <name>substrate</name>
    </ligand>
</feature>
<feature type="binding site" evidence="1">
    <location>
        <begin position="89"/>
        <end position="91"/>
    </location>
    <ligand>
        <name>ATP</name>
        <dbReference type="ChEBI" id="CHEBI:30616"/>
    </ligand>
</feature>
<feature type="binding site" evidence="1">
    <location>
        <position position="99"/>
    </location>
    <ligand>
        <name>ATP</name>
        <dbReference type="ChEBI" id="CHEBI:30616"/>
    </ligand>
</feature>
<feature type="binding site" evidence="1">
    <location>
        <begin position="124"/>
        <end position="130"/>
    </location>
    <ligand>
        <name>ATP</name>
        <dbReference type="ChEBI" id="CHEBI:30616"/>
    </ligand>
</feature>
<feature type="site" description="Transition state stabilizer" evidence="1">
    <location>
        <position position="18"/>
    </location>
</feature>
<evidence type="ECO:0000255" key="1">
    <source>
        <dbReference type="HAMAP-Rule" id="MF_00151"/>
    </source>
</evidence>
<comment type="function">
    <text evidence="1">Reversibly transfers an adenylyl group from ATP to 4'-phosphopantetheine, yielding dephospho-CoA (dPCoA) and pyrophosphate.</text>
</comment>
<comment type="catalytic activity">
    <reaction evidence="1">
        <text>(R)-4'-phosphopantetheine + ATP + H(+) = 3'-dephospho-CoA + diphosphate</text>
        <dbReference type="Rhea" id="RHEA:19801"/>
        <dbReference type="ChEBI" id="CHEBI:15378"/>
        <dbReference type="ChEBI" id="CHEBI:30616"/>
        <dbReference type="ChEBI" id="CHEBI:33019"/>
        <dbReference type="ChEBI" id="CHEBI:57328"/>
        <dbReference type="ChEBI" id="CHEBI:61723"/>
        <dbReference type="EC" id="2.7.7.3"/>
    </reaction>
</comment>
<comment type="cofactor">
    <cofactor evidence="1">
        <name>Mg(2+)</name>
        <dbReference type="ChEBI" id="CHEBI:18420"/>
    </cofactor>
</comment>
<comment type="pathway">
    <text evidence="1">Cofactor biosynthesis; coenzyme A biosynthesis; CoA from (R)-pantothenate: step 4/5.</text>
</comment>
<comment type="subunit">
    <text evidence="1">Homohexamer.</text>
</comment>
<comment type="subcellular location">
    <subcellularLocation>
        <location evidence="1">Cytoplasm</location>
    </subcellularLocation>
</comment>
<comment type="similarity">
    <text evidence="1">Belongs to the bacterial CoaD family.</text>
</comment>